<keyword id="KW-0002">3D-structure</keyword>
<keyword id="KW-0010">Activator</keyword>
<keyword id="KW-0238">DNA-binding</keyword>
<keyword id="KW-0479">Metal-binding</keyword>
<keyword id="KW-0539">Nucleus</keyword>
<keyword id="KW-1267">Proteomics identification</keyword>
<keyword id="KW-1185">Reference proteome</keyword>
<keyword id="KW-0677">Repeat</keyword>
<keyword id="KW-0804">Transcription</keyword>
<keyword id="KW-0805">Transcription regulation</keyword>
<keyword id="KW-0862">Zinc</keyword>
<keyword id="KW-0863">Zinc-finger</keyword>
<proteinExistence type="evidence at protein level"/>
<gene>
    <name type="primary">KLF15</name>
    <name type="synonym">KKLF</name>
</gene>
<reference key="1">
    <citation type="journal article" date="2000" name="Mol. Cell. Biol.">
        <title>Transcriptional regulation of the CLC-K1 promoter by myc-associated zinc finger protein and kidney-enriched Kruppel-like factor, a novel zinc finger repressor.</title>
        <authorList>
            <person name="Uchida S."/>
            <person name="Tanaka Y."/>
            <person name="Ito H."/>
            <person name="Saitoh-Ohara F."/>
            <person name="Inazawa J."/>
            <person name="Yokoyama K.K."/>
            <person name="Sasaki S."/>
            <person name="Marumo F."/>
        </authorList>
    </citation>
    <scope>NUCLEOTIDE SEQUENCE [MRNA]</scope>
    <scope>TISSUE SPECIFICITY</scope>
    <scope>SUBCELLULAR LOCATION</scope>
    <source>
        <tissue>Kidney</tissue>
    </source>
</reference>
<reference key="2">
    <citation type="journal article" date="2004" name="Genome Res.">
        <title>The status, quality, and expansion of the NIH full-length cDNA project: the Mammalian Gene Collection (MGC).</title>
        <authorList>
            <consortium name="The MGC Project Team"/>
        </authorList>
    </citation>
    <scope>NUCLEOTIDE SEQUENCE [LARGE SCALE MRNA]</scope>
    <source>
        <tissue>Skin</tissue>
    </source>
</reference>
<reference key="3">
    <citation type="submission" date="2008-04" db="PDB data bank">
        <title>Solution structure of the second C2H2-type zinc finger domain from human krueppel-like factor 15.</title>
        <authorList>
            <consortium name="RIKEN structural genomics initiative (RSGI)"/>
        </authorList>
    </citation>
    <scope>STRUCTURE BY NMR OF 346-380</scope>
</reference>
<reference key="4">
    <citation type="journal article" date="2007" name="Proc. Natl. Acad. Sci. U.S.A.">
        <title>Kruppel-like factor 15 is a regulator of cardiomyocyte hypertrophy.</title>
        <authorList>
            <person name="Fisch S."/>
            <person name="Gray S."/>
            <person name="Heymans S."/>
            <person name="Haldar S.M."/>
            <person name="Wang B."/>
            <person name="Pfister O."/>
            <person name="Cui L."/>
            <person name="Kumar A."/>
            <person name="Lin Z."/>
            <person name="Sen-Banerjee S."/>
            <person name="Das H."/>
            <person name="Petersen C.A."/>
            <person name="Mende U."/>
            <person name="Burleigh B.A."/>
            <person name="Zhu Y."/>
            <person name="Pinto Y.M."/>
            <person name="Pinto Y."/>
            <person name="Liao R."/>
            <person name="Jain M.K."/>
        </authorList>
    </citation>
    <scope>SUBCELLULAR LOCATION</scope>
    <scope>TISSUE SPECIFICITY</scope>
</reference>
<reference key="5">
    <citation type="journal article" date="2007" name="Proc. Natl. Acad. Sci. U.S.A.">
        <authorList>
            <person name="Fisch S."/>
            <person name="Gray S."/>
            <person name="Heymans S."/>
            <person name="Haldar S.M."/>
            <person name="Wang B."/>
            <person name="Pfister O."/>
            <person name="Cui L."/>
            <person name="Kumar A."/>
            <person name="Lin Z."/>
            <person name="Sen-Banerjee S."/>
            <person name="Das H."/>
            <person name="Petersen C.A."/>
            <person name="Mende U."/>
            <person name="Burleigh B.A."/>
            <person name="Zhu Y."/>
            <person name="Pinto Y.M."/>
            <person name="Pinto Y."/>
            <person name="Liao R."/>
            <person name="Jain M.K."/>
        </authorList>
    </citation>
    <scope>ERRATUM OF PUBMED:17438289</scope>
</reference>
<reference key="6">
    <citation type="journal article" date="2008" name="J. Mol. Cell. Cardiol.">
        <title>The Kruppel-like factor KLF15 inhibits connective tissue growth factor (CTGF) expression in cardiac fibroblasts.</title>
        <authorList>
            <person name="Wang B."/>
            <person name="Haldar S.M."/>
            <person name="Lu Y."/>
            <person name="Ibrahim O.A."/>
            <person name="Fisch S."/>
            <person name="Gray S."/>
            <person name="Leask A."/>
            <person name="Jain M.K."/>
        </authorList>
    </citation>
    <scope>FUNCTION</scope>
</reference>
<reference key="7">
    <citation type="journal article" date="2010" name="J. Biol. Chem.">
        <title>Regulation of cardiac gene expression by KLF15, a repressor of myocardin activity.</title>
        <authorList>
            <person name="Leenders J.J."/>
            <person name="Wijnen W.J."/>
            <person name="Hiller M."/>
            <person name="van der Made I."/>
            <person name="Lentink V."/>
            <person name="van Leeuwen R.E."/>
            <person name="Herias V."/>
            <person name="Pokharel S."/>
            <person name="Heymans S."/>
            <person name="de Windt L.J."/>
            <person name="Hoeydal M.A."/>
            <person name="Pinto Y.M."/>
            <person name="Creemers E.E."/>
        </authorList>
    </citation>
    <scope>FUNCTION AS NEGATIVE REGULATOR OF MYOCD</scope>
    <scope>INTERACTION WITH MYOCD</scope>
</reference>
<reference key="8">
    <citation type="journal article" date="2010" name="Sci. Transl. Med.">
        <title>Klf15 deficiency is a molecular link between heart failure and aortic aneurysm formation.</title>
        <authorList>
            <person name="Haldar S.M."/>
            <person name="Lu Y."/>
            <person name="Jeyaraj D."/>
            <person name="Kawanami D."/>
            <person name="Cui Y."/>
            <person name="Eapen S.J."/>
            <person name="Hao C."/>
            <person name="Li Y."/>
            <person name="Doughman Y.Q."/>
            <person name="Watanabe M."/>
            <person name="Shimizu K."/>
            <person name="Kuivaniemi H."/>
            <person name="Sadoshima J."/>
            <person name="Margulies K.B."/>
            <person name="Cappola T.P."/>
            <person name="Jain M.K."/>
        </authorList>
    </citation>
    <scope>FUNCTION AS NEGATIVE REGULATOR OF TP53 ACETYLATION</scope>
    <scope>TISSUE SPECIFICITY</scope>
    <scope>INVOLVEMENT IN HEART FAILURE</scope>
</reference>
<reference key="9">
    <citation type="journal article" date="2012" name="J. Biol. Chem.">
        <title>Kruppel-like factor 15 (KLF15) is a key regulator of podocyte differentiation.</title>
        <authorList>
            <person name="Mallipattu S.K."/>
            <person name="Liu R."/>
            <person name="Zheng F."/>
            <person name="Narla G."/>
            <person name="Ma'ayan A."/>
            <person name="Dikman S."/>
            <person name="Jain M.K."/>
            <person name="Saleem M."/>
            <person name="D'Agati V."/>
            <person name="Klotman P."/>
            <person name="Chuang P.Y."/>
            <person name="He J.C."/>
        </authorList>
    </citation>
    <scope>INDUCTION</scope>
    <scope>TISSUE SPECIFICITY</scope>
</reference>
<reference key="10">
    <citation type="journal article" date="2012" name="Nature">
        <title>Circadian rhythms govern cardiac repolarization and arrhythmogenesis.</title>
        <authorList>
            <person name="Jeyaraj D."/>
            <person name="Haldar S.M."/>
            <person name="Wan X."/>
            <person name="McCauley M.D."/>
            <person name="Ripperger J.A."/>
            <person name="Hu K."/>
            <person name="Lu Y."/>
            <person name="Eapen B.L."/>
            <person name="Sharma N."/>
            <person name="Ficker E."/>
            <person name="Cutler M.J."/>
            <person name="Gulick J."/>
            <person name="Sanbe A."/>
            <person name="Robbins J."/>
            <person name="Demolombe S."/>
            <person name="Kondratov R.V."/>
            <person name="Shea S.A."/>
            <person name="Albrecht U."/>
            <person name="Wehrens X.H."/>
            <person name="Rosenbaum D.S."/>
            <person name="Jain M.K."/>
        </authorList>
    </citation>
    <scope>INVOLVEMENT IN SUSCEPTIBILITY TO VENTRICULAR ARRHYTHMIAS</scope>
</reference>
<reference key="11">
    <citation type="journal article" date="2013" name="J. Clin. Invest.">
        <title>Kruppel-like factor 15 is critical for vascular inflammation.</title>
        <authorList>
            <person name="Lu Y."/>
            <person name="Zhang L."/>
            <person name="Liao X."/>
            <person name="Sangwung P."/>
            <person name="Prosdocimo D.A."/>
            <person name="Zhou G."/>
            <person name="Votruba A.R."/>
            <person name="Brian L."/>
            <person name="Han Y.J."/>
            <person name="Gao H."/>
            <person name="Wang Y."/>
            <person name="Shimizu K."/>
            <person name="Weinert-Stein K."/>
            <person name="Khrestian M."/>
            <person name="Simon D.I."/>
            <person name="Freedman N.J."/>
            <person name="Jain M.K."/>
        </authorList>
    </citation>
    <scope>FUNCTION AS INHIBITOR OF VASCULAR INFLAMMATION</scope>
    <scope>FUNCTION AS NF-KAPPA-B REPRESSOR</scope>
    <scope>INTERACTION WITH EP300</scope>
</reference>
<reference key="12">
    <citation type="journal article" date="2020" name="Cell. Mol. Life Sci.">
        <title>The evolution of the 9aaTAD domain in Sp2 proteins: inactivation with valines and intron reservoirs.</title>
        <authorList>
            <person name="Piskacek M."/>
            <person name="Havelka M."/>
            <person name="Jendruchova K."/>
            <person name="Knight A."/>
            <person name="Keegan L.P."/>
        </authorList>
    </citation>
    <scope>9AATAD MOTIF</scope>
</reference>
<accession>Q9UIH9</accession>
<comment type="function">
    <text evidence="1 6 7 8 11">Transcriptional regulator that binds to the GA element of the CLCNKA promoter. Binds to the KCNIP2 promoter and regulates KCNIP2 circadian expression in the heart (By similarity). Is a repressor of CCN2 expression, involved in the control of cardiac fibrosis. It is also involved in the control of cardiac hypertrophy acting through the inhibition of MEF2A and GATA4 (By similarity). Involved in podocyte differentiation (By similarity). Inhibits MYOCD activity. Is a negative regulator of TP53 acetylation. Inhibits NF-kappa-B activation through repression of EP300-dependent RELA acetylation.</text>
</comment>
<comment type="subunit">
    <text evidence="8 11">Interacts with MYOCD and EP300.</text>
</comment>
<comment type="interaction">
    <interactant intactId="EBI-2796400">
        <id>Q9UIH9</id>
    </interactant>
    <interactant intactId="EBI-8643161">
        <id>Q9NX04</id>
        <label>AIRIM</label>
    </interactant>
    <organismsDiffer>false</organismsDiffer>
    <experiments>3</experiments>
</comment>
<comment type="interaction">
    <interactant intactId="EBI-2796400">
        <id>Q9UIH9</id>
    </interactant>
    <interactant intactId="EBI-10988864">
        <id>P46379-2</id>
        <label>BAG6</label>
    </interactant>
    <organismsDiffer>false</organismsDiffer>
    <experiments>3</experiments>
</comment>
<comment type="interaction">
    <interactant intactId="EBI-2796400">
        <id>Q9UIH9</id>
    </interactant>
    <interactant intactId="EBI-11524452">
        <id>Q8N9N5-2</id>
        <label>BANP</label>
    </interactant>
    <organismsDiffer>false</organismsDiffer>
    <experiments>3</experiments>
</comment>
<comment type="interaction">
    <interactant intactId="EBI-2796400">
        <id>Q9UIH9</id>
    </interactant>
    <interactant intactId="EBI-12002214">
        <id>Q9H3H3-3</id>
        <label>C11orf68</label>
    </interactant>
    <organismsDiffer>false</organismsDiffer>
    <experiments>3</experiments>
</comment>
<comment type="interaction">
    <interactant intactId="EBI-2796400">
        <id>Q9UIH9</id>
    </interactant>
    <interactant intactId="EBI-10961624">
        <id>Q2TAC2-2</id>
        <label>CCDC57</label>
    </interactant>
    <organismsDiffer>false</organismsDiffer>
    <experiments>3</experiments>
</comment>
<comment type="interaction">
    <interactant intactId="EBI-2796400">
        <id>Q9UIH9</id>
    </interactant>
    <interactant intactId="EBI-21553822">
        <id>Q96A83-2</id>
        <label>COL26A1</label>
    </interactant>
    <organismsDiffer>false</organismsDiffer>
    <experiments>3</experiments>
</comment>
<comment type="interaction">
    <interactant intactId="EBI-2796400">
        <id>Q9UIH9</id>
    </interactant>
    <interactant intactId="EBI-395638">
        <id>O14645</id>
        <label>DNALI1</label>
    </interactant>
    <organismsDiffer>false</organismsDiffer>
    <experiments>3</experiments>
</comment>
<comment type="interaction">
    <interactant intactId="EBI-2796400">
        <id>Q9UIH9</id>
    </interactant>
    <interactant intactId="EBI-750300">
        <id>Q01658</id>
        <label>DR1</label>
    </interactant>
    <organismsDiffer>false</organismsDiffer>
    <experiments>3</experiments>
</comment>
<comment type="interaction">
    <interactant intactId="EBI-2796400">
        <id>Q9UIH9</id>
    </interactant>
    <interactant intactId="EBI-739789">
        <id>Q92997</id>
        <label>DVL3</label>
    </interactant>
    <organismsDiffer>false</organismsDiffer>
    <experiments>5</experiments>
</comment>
<comment type="interaction">
    <interactant intactId="EBI-2796400">
        <id>Q9UIH9</id>
    </interactant>
    <interactant intactId="EBI-852851">
        <id>P01100</id>
        <label>FOS</label>
    </interactant>
    <organismsDiffer>false</organismsDiffer>
    <experiments>3</experiments>
</comment>
<comment type="interaction">
    <interactant intactId="EBI-2796400">
        <id>Q9UIH9</id>
    </interactant>
    <interactant intactId="EBI-401755">
        <id>P62993</id>
        <label>GRB2</label>
    </interactant>
    <organismsDiffer>false</organismsDiffer>
    <experiments>3</experiments>
</comment>
<comment type="interaction">
    <interactant intactId="EBI-2796400">
        <id>Q9UIH9</id>
    </interactant>
    <interactant intactId="EBI-6980805">
        <id>P42261</id>
        <label>GRIA1</label>
    </interactant>
    <organismsDiffer>false</organismsDiffer>
    <experiments>3</experiments>
</comment>
<comment type="interaction">
    <interactant intactId="EBI-2796400">
        <id>Q9UIH9</id>
    </interactant>
    <interactant intactId="EBI-747754">
        <id>P28799</id>
        <label>GRN</label>
    </interactant>
    <organismsDiffer>false</organismsDiffer>
    <experiments>3</experiments>
</comment>
<comment type="interaction">
    <interactant intactId="EBI-2796400">
        <id>Q9UIH9</id>
    </interactant>
    <interactant intactId="EBI-389564">
        <id>Q00403</id>
        <label>GTF2B</label>
    </interactant>
    <organismsDiffer>false</organismsDiffer>
    <experiments>3</experiments>
</comment>
<comment type="interaction">
    <interactant intactId="EBI-2796400">
        <id>Q9UIH9</id>
    </interactant>
    <interactant intactId="EBI-1054873">
        <id>Q9Y5Q9</id>
        <label>GTF3C3</label>
    </interactant>
    <organismsDiffer>false</organismsDiffer>
    <experiments>3</experiments>
</comment>
<comment type="interaction">
    <interactant intactId="EBI-2796400">
        <id>Q9UIH9</id>
    </interactant>
    <interactant intactId="EBI-352986">
        <id>P52597</id>
        <label>HNRNPF</label>
    </interactant>
    <organismsDiffer>false</organismsDiffer>
    <experiments>3</experiments>
</comment>
<comment type="interaction">
    <interactant intactId="EBI-2796400">
        <id>Q9UIH9</id>
    </interactant>
    <interactant intactId="EBI-719620">
        <id>Q00613</id>
        <label>HSF1</label>
    </interactant>
    <organismsDiffer>false</organismsDiffer>
    <experiments>3</experiments>
</comment>
<comment type="interaction">
    <interactant intactId="EBI-2796400">
        <id>Q9UIH9</id>
    </interactant>
    <interactant intactId="EBI-352682">
        <id>P04792</id>
        <label>HSPB1</label>
    </interactant>
    <organismsDiffer>false</organismsDiffer>
    <experiments>3</experiments>
</comment>
<comment type="interaction">
    <interactant intactId="EBI-2796400">
        <id>Q9UIH9</id>
    </interactant>
    <interactant intactId="EBI-473695">
        <id>Q8WVZ9</id>
        <label>KBTBD7</label>
    </interactant>
    <organismsDiffer>false</organismsDiffer>
    <experiments>3</experiments>
</comment>
<comment type="interaction">
    <interactant intactId="EBI-2796400">
        <id>Q9UIH9</id>
    </interactant>
    <interactant intactId="EBI-10975473">
        <id>O60333-2</id>
        <label>KIF1B</label>
    </interactant>
    <organismsDiffer>false</organismsDiffer>
    <experiments>3</experiments>
</comment>
<comment type="interaction">
    <interactant intactId="EBI-2796400">
        <id>Q9UIH9</id>
    </interactant>
    <interactant intactId="EBI-948266">
        <id>O14901</id>
        <label>KLF11</label>
    </interactant>
    <organismsDiffer>false</organismsDiffer>
    <experiments>3</experiments>
</comment>
<comment type="interaction">
    <interactant intactId="EBI-2796400">
        <id>Q9UIH9</id>
    </interactant>
    <interactant intactId="EBI-1050743">
        <id>P31153</id>
        <label>MAT2A</label>
    </interactant>
    <organismsDiffer>false</organismsDiffer>
    <experiments>3</experiments>
</comment>
<comment type="interaction">
    <interactant intactId="EBI-2796400">
        <id>Q9UIH9</id>
    </interactant>
    <interactant intactId="EBI-11956831">
        <id>Q13952-2</id>
        <label>NFYC</label>
    </interactant>
    <organismsDiffer>false</organismsDiffer>
    <experiments>3</experiments>
</comment>
<comment type="interaction">
    <interactant intactId="EBI-2796400">
        <id>Q9UIH9</id>
    </interactant>
    <interactant intactId="EBI-11742836">
        <id>Q16656-4</id>
        <label>NRF1</label>
    </interactant>
    <organismsDiffer>false</organismsDiffer>
    <experiments>3</experiments>
</comment>
<comment type="interaction">
    <interactant intactId="EBI-2796400">
        <id>Q9UIH9</id>
    </interactant>
    <interactant intactId="EBI-473160">
        <id>Q8N2W9</id>
        <label>PIAS4</label>
    </interactant>
    <organismsDiffer>false</organismsDiffer>
    <experiments>3</experiments>
</comment>
<comment type="interaction">
    <interactant intactId="EBI-2796400">
        <id>Q9UIH9</id>
    </interactant>
    <interactant intactId="EBI-50433196">
        <id>A0A6Q8PF08</id>
        <label>PMP22</label>
    </interactant>
    <organismsDiffer>false</organismsDiffer>
    <experiments>3</experiments>
</comment>
<comment type="interaction">
    <interactant intactId="EBI-2796400">
        <id>Q9UIH9</id>
    </interactant>
    <interactant intactId="EBI-1055079">
        <id>O15160</id>
        <label>POLR1C</label>
    </interactant>
    <organismsDiffer>false</organismsDiffer>
    <experiments>3</experiments>
</comment>
<comment type="interaction">
    <interactant intactId="EBI-2796400">
        <id>Q9UIH9</id>
    </interactant>
    <interactant intactId="EBI-1053424">
        <id>O43741</id>
        <label>PRKAB2</label>
    </interactant>
    <organismsDiffer>false</organismsDiffer>
    <experiments>9</experiments>
</comment>
<comment type="interaction">
    <interactant intactId="EBI-2796400">
        <id>Q9UIH9</id>
    </interactant>
    <interactant intactId="EBI-21251460">
        <id>O60260-5</id>
        <label>PRKN</label>
    </interactant>
    <organismsDiffer>false</organismsDiffer>
    <experiments>3</experiments>
</comment>
<comment type="interaction">
    <interactant intactId="EBI-2796400">
        <id>Q9UIH9</id>
    </interactant>
    <interactant intactId="EBI-745098">
        <id>P62491</id>
        <label>RAB11A</label>
    </interactant>
    <organismsDiffer>false</organismsDiffer>
    <experiments>3</experiments>
</comment>
<comment type="interaction">
    <interactant intactId="EBI-2796400">
        <id>Q9UIH9</id>
    </interactant>
    <interactant intactId="EBI-396669">
        <id>Q9Y3C5</id>
        <label>RNF11</label>
    </interactant>
    <organismsDiffer>false</organismsDiffer>
    <experiments>3</experiments>
</comment>
<comment type="interaction">
    <interactant intactId="EBI-2796400">
        <id>Q9UIH9</id>
    </interactant>
    <interactant intactId="EBI-748391">
        <id>Q9BWG6</id>
        <label>SCNM1</label>
    </interactant>
    <organismsDiffer>false</organismsDiffer>
    <experiments>3</experiments>
</comment>
<comment type="interaction">
    <interactant intactId="EBI-2796400">
        <id>Q9UIH9</id>
    </interactant>
    <interactant intactId="EBI-11955083">
        <id>Q9NUL5-4</id>
        <label>SHFL</label>
    </interactant>
    <organismsDiffer>false</organismsDiffer>
    <experiments>3</experiments>
</comment>
<comment type="interaction">
    <interactant intactId="EBI-2796400">
        <id>Q9UIH9</id>
    </interactant>
    <interactant intactId="EBI-985879">
        <id>P37840</id>
        <label>SNCA</label>
    </interactant>
    <organismsDiffer>false</organismsDiffer>
    <experiments>3</experiments>
</comment>
<comment type="interaction">
    <interactant intactId="EBI-2796400">
        <id>Q9UIH9</id>
    </interactant>
    <interactant intactId="EBI-621482">
        <id>P12931</id>
        <label>SRC</label>
    </interactant>
    <organismsDiffer>false</organismsDiffer>
    <experiments>3</experiments>
</comment>
<comment type="interaction">
    <interactant intactId="EBI-2796400">
        <id>Q9UIH9</id>
    </interactant>
    <interactant intactId="EBI-372899">
        <id>Q13148</id>
        <label>TARDBP</label>
    </interactant>
    <organismsDiffer>false</organismsDiffer>
    <experiments>6</experiments>
</comment>
<comment type="interaction">
    <interactant intactId="EBI-2796400">
        <id>Q9UIH9</id>
    </interactant>
    <interactant intactId="EBI-720609">
        <id>O76024</id>
        <label>WFS1</label>
    </interactant>
    <organismsDiffer>false</organismsDiffer>
    <experiments>3</experiments>
</comment>
<comment type="interaction">
    <interactant intactId="EBI-2796400">
        <id>Q9UIH9</id>
    </interactant>
    <interactant intactId="EBI-744471">
        <id>O43167</id>
        <label>ZBTB24</label>
    </interactant>
    <organismsDiffer>false</organismsDiffer>
    <experiments>10</experiments>
</comment>
<comment type="interaction">
    <interactant intactId="EBI-2796400">
        <id>Q9UIH9</id>
    </interactant>
    <interactant intactId="EBI-373456">
        <id>Q9Y3S2</id>
        <label>ZNF330</label>
    </interactant>
    <organismsDiffer>false</organismsDiffer>
    <experiments>5</experiments>
</comment>
<comment type="interaction">
    <interactant intactId="EBI-2796400">
        <id>Q9UIH9</id>
    </interactant>
    <interactant intactId="EBI-7254550">
        <id>P36508</id>
        <label>ZNF76</label>
    </interactant>
    <organismsDiffer>false</organismsDiffer>
    <experiments>3</experiments>
</comment>
<comment type="subcellular location">
    <subcellularLocation>
        <location evidence="4 5">Nucleus</location>
    </subcellularLocation>
</comment>
<comment type="tissue specificity">
    <text evidence="4 5 7 10">Highly expressed in liver, skeletal muscle, and kidney. Expressed in cardiomyocytes. Expression is highly reduced in cardiac tissue of patients with non-ischemic cardiomyopathy and aortic aneurysm, and in glomerular disease. Not expressed in bone marrow or lymphoid tissues.</text>
</comment>
<comment type="induction">
    <text evidence="10">In podocytes, up-regulated by retinoic acid.</text>
</comment>
<comment type="domain">
    <text evidence="12">The 9aaTAD motif is a transactivation domain present in a large number of yeast and animal transcription factors.</text>
</comment>
<comment type="disease">
    <text evidence="7 9">KLF15 deficiency results in loss of rhythmic QT variation and abnormal heart repolarization (PubMed:22367544). It may play a role in susceptibility to ventricular arrhythmias (PubMed:22367544), and development of pathological cardiac hypertrophy leading to heart failure (PubMed:20375365).</text>
</comment>
<comment type="similarity">
    <text evidence="13">Belongs to the Sp1 C2H2-type zinc-finger protein family.</text>
</comment>
<feature type="chain" id="PRO_0000047187" description="Krueppel-like factor 15">
    <location>
        <begin position="1"/>
        <end position="416"/>
    </location>
</feature>
<feature type="zinc finger region" description="C2H2-type 1" evidence="2">
    <location>
        <begin position="321"/>
        <end position="345"/>
    </location>
</feature>
<feature type="zinc finger region" description="C2H2-type 2" evidence="2">
    <location>
        <begin position="351"/>
        <end position="375"/>
    </location>
</feature>
<feature type="zinc finger region" description="C2H2-type 3" evidence="2">
    <location>
        <begin position="381"/>
        <end position="403"/>
    </location>
</feature>
<feature type="region of interest" description="Disordered" evidence="3">
    <location>
        <begin position="156"/>
        <end position="219"/>
    </location>
</feature>
<feature type="short sequence motif" description="9aaTAD" evidence="12">
    <location>
        <begin position="75"/>
        <end position="83"/>
    </location>
</feature>
<feature type="compositionally biased region" description="Basic and acidic residues" evidence="3">
    <location>
        <begin position="156"/>
        <end position="168"/>
    </location>
</feature>
<feature type="compositionally biased region" description="Gly residues" evidence="3">
    <location>
        <begin position="199"/>
        <end position="212"/>
    </location>
</feature>
<feature type="strand" evidence="14">
    <location>
        <begin position="355"/>
        <end position="357"/>
    </location>
</feature>
<feature type="strand" evidence="14">
    <location>
        <begin position="361"/>
        <end position="364"/>
    </location>
</feature>
<feature type="helix" evidence="14">
    <location>
        <begin position="365"/>
        <end position="372"/>
    </location>
</feature>
<sequence length="416" mass="43992">MVDHLLPVDENFSSPKCPVGYLGDRLVGRRAYHMLPSPVSEDDSDASSPCSCSSPDSQALCSCYGGGLGTESQDSILDFLLSQATLGSGGGSGSSIGASSGPVAWGPWRRAAAPVKGEHFCLPEFPLGDPDDVPRPFQPTLEEIEEFLEENMEPGVKEVPEGNSKDLDACSQLSAGPHKSHLHPGSSGRERCSPPPGGASAGGAQGPGGGPTPDGPIPVLLQIQPVPVKQESGTGPASPGQAPENVKVAQLLVNIQGQTFALVPQVVPSSNLNLPSKFVRIAPVPIAAKPVGSGPLGPGPAGLLMGQKFPKNPAAELIKMHKCTFPGCSKMYTKSSHLKAHLRRHTGEKPFACTWPGCGWRFSRSDELSRHRRSHSGVKPYQCPVCEKKFARSDHLSKHIKVHRFPRSSRSVRSVN</sequence>
<protein>
    <recommendedName>
        <fullName>Krueppel-like factor 15</fullName>
    </recommendedName>
    <alternativeName>
        <fullName>Kidney-enriched krueppel-like factor</fullName>
    </alternativeName>
</protein>
<name>KLF15_HUMAN</name>
<dbReference type="EMBL" id="AB029254">
    <property type="protein sequence ID" value="BAA88561.1"/>
    <property type="molecule type" value="mRNA"/>
</dbReference>
<dbReference type="EMBL" id="BC036733">
    <property type="protein sequence ID" value="AAH36733.1"/>
    <property type="molecule type" value="mRNA"/>
</dbReference>
<dbReference type="CCDS" id="CCDS3036.1"/>
<dbReference type="RefSeq" id="NP_054798.1">
    <property type="nucleotide sequence ID" value="NM_014079.4"/>
</dbReference>
<dbReference type="RefSeq" id="XP_005247457.1">
    <property type="nucleotide sequence ID" value="XM_005247400.3"/>
</dbReference>
<dbReference type="PDB" id="2ENT">
    <property type="method" value="NMR"/>
    <property type="chains" value="A=346-380"/>
</dbReference>
<dbReference type="PDBsum" id="2ENT"/>
<dbReference type="SMR" id="Q9UIH9"/>
<dbReference type="BioGRID" id="118818">
    <property type="interactions" value="279"/>
</dbReference>
<dbReference type="FunCoup" id="Q9UIH9">
    <property type="interactions" value="1658"/>
</dbReference>
<dbReference type="IntAct" id="Q9UIH9">
    <property type="interactions" value="298"/>
</dbReference>
<dbReference type="MINT" id="Q9UIH9"/>
<dbReference type="STRING" id="9606.ENSP00000296233"/>
<dbReference type="GlyGen" id="Q9UIH9">
    <property type="glycosylation" value="1 site"/>
</dbReference>
<dbReference type="iPTMnet" id="Q9UIH9"/>
<dbReference type="PhosphoSitePlus" id="Q9UIH9"/>
<dbReference type="BioMuta" id="KLF15"/>
<dbReference type="DMDM" id="20138787"/>
<dbReference type="jPOST" id="Q9UIH9"/>
<dbReference type="MassIVE" id="Q9UIH9"/>
<dbReference type="PaxDb" id="9606-ENSP00000296233"/>
<dbReference type="PeptideAtlas" id="Q9UIH9"/>
<dbReference type="Antibodypedia" id="17142">
    <property type="antibodies" value="359 antibodies from 35 providers"/>
</dbReference>
<dbReference type="DNASU" id="28999"/>
<dbReference type="Ensembl" id="ENST00000296233.4">
    <property type="protein sequence ID" value="ENSP00000296233.3"/>
    <property type="gene ID" value="ENSG00000163884.4"/>
</dbReference>
<dbReference type="GeneID" id="28999"/>
<dbReference type="KEGG" id="hsa:28999"/>
<dbReference type="MANE-Select" id="ENST00000296233.4">
    <property type="protein sequence ID" value="ENSP00000296233.3"/>
    <property type="RefSeq nucleotide sequence ID" value="NM_014079.4"/>
    <property type="RefSeq protein sequence ID" value="NP_054798.1"/>
</dbReference>
<dbReference type="UCSC" id="uc011bkk.2">
    <property type="organism name" value="human"/>
</dbReference>
<dbReference type="AGR" id="HGNC:14536"/>
<dbReference type="CTD" id="28999"/>
<dbReference type="DisGeNET" id="28999"/>
<dbReference type="GeneCards" id="KLF15"/>
<dbReference type="HGNC" id="HGNC:14536">
    <property type="gene designation" value="KLF15"/>
</dbReference>
<dbReference type="HPA" id="ENSG00000163884">
    <property type="expression patterns" value="Tissue enhanced (liver)"/>
</dbReference>
<dbReference type="MIM" id="606465">
    <property type="type" value="gene"/>
</dbReference>
<dbReference type="neXtProt" id="NX_Q9UIH9"/>
<dbReference type="OpenTargets" id="ENSG00000163884"/>
<dbReference type="PharmGKB" id="PA30134"/>
<dbReference type="VEuPathDB" id="HostDB:ENSG00000163884"/>
<dbReference type="eggNOG" id="KOG1721">
    <property type="taxonomic scope" value="Eukaryota"/>
</dbReference>
<dbReference type="GeneTree" id="ENSGT00940000156977"/>
<dbReference type="HOGENOM" id="CLU_035818_0_0_1"/>
<dbReference type="InParanoid" id="Q9UIH9"/>
<dbReference type="OMA" id="NAAASWW"/>
<dbReference type="OrthoDB" id="6365676at2759"/>
<dbReference type="PAN-GO" id="Q9UIH9">
    <property type="GO annotations" value="3 GO annotations based on evolutionary models"/>
</dbReference>
<dbReference type="PhylomeDB" id="Q9UIH9"/>
<dbReference type="TreeFam" id="TF350556"/>
<dbReference type="PathwayCommons" id="Q9UIH9"/>
<dbReference type="Reactome" id="R-HSA-1368108">
    <property type="pathway name" value="BMAL1:CLOCK,NPAS2 activates circadian gene expression"/>
</dbReference>
<dbReference type="SignaLink" id="Q9UIH9"/>
<dbReference type="SIGNOR" id="Q9UIH9"/>
<dbReference type="BioGRID-ORCS" id="28999">
    <property type="hits" value="13 hits in 1173 CRISPR screens"/>
</dbReference>
<dbReference type="ChiTaRS" id="KLF15">
    <property type="organism name" value="human"/>
</dbReference>
<dbReference type="EvolutionaryTrace" id="Q9UIH9"/>
<dbReference type="GeneWiki" id="KLF15"/>
<dbReference type="GenomeRNAi" id="28999"/>
<dbReference type="Pharos" id="Q9UIH9">
    <property type="development level" value="Tbio"/>
</dbReference>
<dbReference type="PRO" id="PR:Q9UIH9"/>
<dbReference type="Proteomes" id="UP000005640">
    <property type="component" value="Chromosome 3"/>
</dbReference>
<dbReference type="RNAct" id="Q9UIH9">
    <property type="molecule type" value="protein"/>
</dbReference>
<dbReference type="Bgee" id="ENSG00000163884">
    <property type="expression patterns" value="Expressed in parotid gland and 175 other cell types or tissues"/>
</dbReference>
<dbReference type="GO" id="GO:0000785">
    <property type="term" value="C:chromatin"/>
    <property type="evidence" value="ECO:0000247"/>
    <property type="project" value="NTNU_SB"/>
</dbReference>
<dbReference type="GO" id="GO:0043231">
    <property type="term" value="C:intracellular membrane-bounded organelle"/>
    <property type="evidence" value="ECO:0000314"/>
    <property type="project" value="HPA"/>
</dbReference>
<dbReference type="GO" id="GO:0016607">
    <property type="term" value="C:nuclear speck"/>
    <property type="evidence" value="ECO:0000314"/>
    <property type="project" value="HPA"/>
</dbReference>
<dbReference type="GO" id="GO:0005654">
    <property type="term" value="C:nucleoplasm"/>
    <property type="evidence" value="ECO:0000314"/>
    <property type="project" value="HPA"/>
</dbReference>
<dbReference type="GO" id="GO:0005634">
    <property type="term" value="C:nucleus"/>
    <property type="evidence" value="ECO:0000314"/>
    <property type="project" value="UniProtKB"/>
</dbReference>
<dbReference type="GO" id="GO:0001228">
    <property type="term" value="F:DNA-binding transcription activator activity, RNA polymerase II-specific"/>
    <property type="evidence" value="ECO:0000315"/>
    <property type="project" value="BHF-UCL"/>
</dbReference>
<dbReference type="GO" id="GO:0000981">
    <property type="term" value="F:DNA-binding transcription factor activity, RNA polymerase II-specific"/>
    <property type="evidence" value="ECO:0000247"/>
    <property type="project" value="NTNU_SB"/>
</dbReference>
<dbReference type="GO" id="GO:0000978">
    <property type="term" value="F:RNA polymerase II cis-regulatory region sequence-specific DNA binding"/>
    <property type="evidence" value="ECO:0000314"/>
    <property type="project" value="BHF-UCL"/>
</dbReference>
<dbReference type="GO" id="GO:0000977">
    <property type="term" value="F:RNA polymerase II transcription regulatory region sequence-specific DNA binding"/>
    <property type="evidence" value="ECO:0000314"/>
    <property type="project" value="BHF-UCL"/>
</dbReference>
<dbReference type="GO" id="GO:1990837">
    <property type="term" value="F:sequence-specific double-stranded DNA binding"/>
    <property type="evidence" value="ECO:0000314"/>
    <property type="project" value="ARUK-UCL"/>
</dbReference>
<dbReference type="GO" id="GO:0000976">
    <property type="term" value="F:transcription cis-regulatory region binding"/>
    <property type="evidence" value="ECO:0000250"/>
    <property type="project" value="UniProtKB"/>
</dbReference>
<dbReference type="GO" id="GO:0008270">
    <property type="term" value="F:zinc ion binding"/>
    <property type="evidence" value="ECO:0007669"/>
    <property type="project" value="UniProtKB-KW"/>
</dbReference>
<dbReference type="GO" id="GO:0014898">
    <property type="term" value="P:cardiac muscle hypertrophy in response to stress"/>
    <property type="evidence" value="ECO:0007669"/>
    <property type="project" value="Ensembl"/>
</dbReference>
<dbReference type="GO" id="GO:1901653">
    <property type="term" value="P:cellular response to peptide"/>
    <property type="evidence" value="ECO:0007669"/>
    <property type="project" value="Ensembl"/>
</dbReference>
<dbReference type="GO" id="GO:0010001">
    <property type="term" value="P:glial cell differentiation"/>
    <property type="evidence" value="ECO:0007669"/>
    <property type="project" value="Ensembl"/>
</dbReference>
<dbReference type="GO" id="GO:0001678">
    <property type="term" value="P:intracellular glucose homeostasis"/>
    <property type="evidence" value="ECO:0007669"/>
    <property type="project" value="Ensembl"/>
</dbReference>
<dbReference type="GO" id="GO:2000757">
    <property type="term" value="P:negative regulation of peptidyl-lysine acetylation"/>
    <property type="evidence" value="ECO:0000315"/>
    <property type="project" value="UniProtKB"/>
</dbReference>
<dbReference type="GO" id="GO:0072112">
    <property type="term" value="P:podocyte differentiation"/>
    <property type="evidence" value="ECO:0000250"/>
    <property type="project" value="UniProtKB"/>
</dbReference>
<dbReference type="GO" id="GO:0046326">
    <property type="term" value="P:positive regulation of D-glucose import"/>
    <property type="evidence" value="ECO:0007669"/>
    <property type="project" value="Ensembl"/>
</dbReference>
<dbReference type="GO" id="GO:0045944">
    <property type="term" value="P:positive regulation of transcription by RNA polymerase II"/>
    <property type="evidence" value="ECO:0000315"/>
    <property type="project" value="BHF-UCL"/>
</dbReference>
<dbReference type="GO" id="GO:0006357">
    <property type="term" value="P:regulation of transcription by RNA polymerase II"/>
    <property type="evidence" value="ECO:0000318"/>
    <property type="project" value="GO_Central"/>
</dbReference>
<dbReference type="GO" id="GO:0030111">
    <property type="term" value="P:regulation of Wnt signaling pathway"/>
    <property type="evidence" value="ECO:0007669"/>
    <property type="project" value="Ensembl"/>
</dbReference>
<dbReference type="GO" id="GO:0032868">
    <property type="term" value="P:response to insulin"/>
    <property type="evidence" value="ECO:0007669"/>
    <property type="project" value="Ensembl"/>
</dbReference>
<dbReference type="CDD" id="cd21580">
    <property type="entry name" value="KLF15_N"/>
    <property type="match status" value="1"/>
</dbReference>
<dbReference type="FunFam" id="3.30.160.60:FF:000018">
    <property type="entry name" value="Krueppel-like factor 15"/>
    <property type="match status" value="1"/>
</dbReference>
<dbReference type="FunFam" id="3.30.160.60:FF:000368">
    <property type="entry name" value="Krueppel-like factor 15"/>
    <property type="match status" value="1"/>
</dbReference>
<dbReference type="FunFam" id="3.30.160.60:FF:000624">
    <property type="entry name" value="zinc finger protein 697"/>
    <property type="match status" value="1"/>
</dbReference>
<dbReference type="Gene3D" id="3.30.160.60">
    <property type="entry name" value="Classic Zinc Finger"/>
    <property type="match status" value="3"/>
</dbReference>
<dbReference type="InterPro" id="IPR036236">
    <property type="entry name" value="Znf_C2H2_sf"/>
</dbReference>
<dbReference type="InterPro" id="IPR013087">
    <property type="entry name" value="Znf_C2H2_type"/>
</dbReference>
<dbReference type="PANTHER" id="PTHR23235:SF44">
    <property type="entry name" value="KRUEPPEL-LIKE FACTOR 15"/>
    <property type="match status" value="1"/>
</dbReference>
<dbReference type="PANTHER" id="PTHR23235">
    <property type="entry name" value="KRUEPPEL-LIKE TRANSCRIPTION FACTOR"/>
    <property type="match status" value="1"/>
</dbReference>
<dbReference type="Pfam" id="PF00096">
    <property type="entry name" value="zf-C2H2"/>
    <property type="match status" value="3"/>
</dbReference>
<dbReference type="SMART" id="SM00355">
    <property type="entry name" value="ZnF_C2H2"/>
    <property type="match status" value="3"/>
</dbReference>
<dbReference type="SUPFAM" id="SSF57667">
    <property type="entry name" value="beta-beta-alpha zinc fingers"/>
    <property type="match status" value="2"/>
</dbReference>
<dbReference type="PROSITE" id="PS00028">
    <property type="entry name" value="ZINC_FINGER_C2H2_1"/>
    <property type="match status" value="3"/>
</dbReference>
<dbReference type="PROSITE" id="PS50157">
    <property type="entry name" value="ZINC_FINGER_C2H2_2"/>
    <property type="match status" value="3"/>
</dbReference>
<organism>
    <name type="scientific">Homo sapiens</name>
    <name type="common">Human</name>
    <dbReference type="NCBI Taxonomy" id="9606"/>
    <lineage>
        <taxon>Eukaryota</taxon>
        <taxon>Metazoa</taxon>
        <taxon>Chordata</taxon>
        <taxon>Craniata</taxon>
        <taxon>Vertebrata</taxon>
        <taxon>Euteleostomi</taxon>
        <taxon>Mammalia</taxon>
        <taxon>Eutheria</taxon>
        <taxon>Euarchontoglires</taxon>
        <taxon>Primates</taxon>
        <taxon>Haplorrhini</taxon>
        <taxon>Catarrhini</taxon>
        <taxon>Hominidae</taxon>
        <taxon>Homo</taxon>
    </lineage>
</organism>
<evidence type="ECO:0000250" key="1"/>
<evidence type="ECO:0000255" key="2">
    <source>
        <dbReference type="PROSITE-ProRule" id="PRU00042"/>
    </source>
</evidence>
<evidence type="ECO:0000256" key="3">
    <source>
        <dbReference type="SAM" id="MobiDB-lite"/>
    </source>
</evidence>
<evidence type="ECO:0000269" key="4">
    <source>
    </source>
</evidence>
<evidence type="ECO:0000269" key="5">
    <source>
    </source>
</evidence>
<evidence type="ECO:0000269" key="6">
    <source>
    </source>
</evidence>
<evidence type="ECO:0000269" key="7">
    <source>
    </source>
</evidence>
<evidence type="ECO:0000269" key="8">
    <source>
    </source>
</evidence>
<evidence type="ECO:0000269" key="9">
    <source>
    </source>
</evidence>
<evidence type="ECO:0000269" key="10">
    <source>
    </source>
</evidence>
<evidence type="ECO:0000269" key="11">
    <source>
    </source>
</evidence>
<evidence type="ECO:0000269" key="12">
    <source>
    </source>
</evidence>
<evidence type="ECO:0000305" key="13"/>
<evidence type="ECO:0007829" key="14">
    <source>
        <dbReference type="PDB" id="2ENT"/>
    </source>
</evidence>